<name>BRNP3_HUMAN</name>
<proteinExistence type="evidence at protein level"/>
<feature type="signal peptide" evidence="2">
    <location>
        <begin position="1"/>
        <end position="33"/>
    </location>
</feature>
<feature type="chain" id="PRO_0000045774" description="BMP/retinoic acid-inducible neural-specific protein 3">
    <location>
        <begin position="34"/>
        <end position="766"/>
    </location>
</feature>
<feature type="domain" description="MACPF">
    <location>
        <begin position="74"/>
        <end position="264"/>
    </location>
</feature>
<feature type="glycosylation site" description="N-linked (GlcNAc...) asparagine" evidence="2">
    <location>
        <position position="168"/>
    </location>
</feature>
<feature type="glycosylation site" description="N-linked (GlcNAc...) asparagine" evidence="2">
    <location>
        <position position="337"/>
    </location>
</feature>
<feature type="glycosylation site" description="N-linked (GlcNAc...) asparagine" evidence="2">
    <location>
        <position position="456"/>
    </location>
</feature>
<feature type="glycosylation site" description="N-linked (GlcNAc...) asparagine" evidence="2">
    <location>
        <position position="562"/>
    </location>
</feature>
<feature type="glycosylation site" description="N-linked (GlcNAc...) asparagine" evidence="2">
    <location>
        <position position="609"/>
    </location>
</feature>
<feature type="glycosylation site" description="N-linked (GlcNAc...) asparagine" evidence="2">
    <location>
        <position position="641"/>
    </location>
</feature>
<feature type="splice variant" id="VSP_055545" description="In isoform 2." evidence="6">
    <original>MIWRSRAGAELFSLMALWEWIALSLHCWVLAVAAVSDQHA</original>
    <variation>MPQAPSTGSSLIRDPSIAHRNTQILWTEAGRDLAQDTRYT</variation>
    <location>
        <begin position="1"/>
        <end position="40"/>
    </location>
</feature>
<feature type="splice variant" id="VSP_055546" description="In isoform 2." evidence="6">
    <location>
        <begin position="41"/>
        <end position="142"/>
    </location>
</feature>
<feature type="sequence conflict" description="In Ref. 3; AAD09521." evidence="7" ref="3">
    <original>E</original>
    <variation>K</variation>
    <location>
        <position position="422"/>
    </location>
</feature>
<feature type="sequence conflict" description="In Ref. 3; AAD09521." evidence="7" ref="3">
    <original>L</original>
    <variation>F</variation>
    <location>
        <position position="534"/>
    </location>
</feature>
<keyword id="KW-0025">Alternative splicing</keyword>
<keyword id="KW-0131">Cell cycle</keyword>
<keyword id="KW-0325">Glycoprotein</keyword>
<keyword id="KW-0338">Growth arrest</keyword>
<keyword id="KW-0496">Mitochondrion</keyword>
<keyword id="KW-1267">Proteomics identification</keyword>
<keyword id="KW-1185">Reference proteome</keyword>
<keyword id="KW-0964">Secreted</keyword>
<keyword id="KW-0732">Signal</keyword>
<protein>
    <recommendedName>
        <fullName>BMP/retinoic acid-inducible neural-specific protein 3</fullName>
    </recommendedName>
    <alternativeName>
        <fullName>DBCCR1-like protein 1</fullName>
    </alternativeName>
</protein>
<reference key="1">
    <citation type="submission" date="2003-06" db="EMBL/GenBank/DDBJ databases">
        <title>Identification and characterization of novel gene, DBCCR1L.</title>
        <authorList>
            <person name="Imoto I."/>
            <person name="Inazawa J."/>
        </authorList>
    </citation>
    <scope>NUCLEOTIDE SEQUENCE [MRNA] (ISOFORM 1)</scope>
</reference>
<reference key="2">
    <citation type="journal article" date="2004" name="Nat. Genet.">
        <title>Complete sequencing and characterization of 21,243 full-length human cDNAs.</title>
        <authorList>
            <person name="Ota T."/>
            <person name="Suzuki Y."/>
            <person name="Nishikawa T."/>
            <person name="Otsuki T."/>
            <person name="Sugiyama T."/>
            <person name="Irie R."/>
            <person name="Wakamatsu A."/>
            <person name="Hayashi K."/>
            <person name="Sato H."/>
            <person name="Nagai K."/>
            <person name="Kimura K."/>
            <person name="Makita H."/>
            <person name="Sekine M."/>
            <person name="Obayashi M."/>
            <person name="Nishi T."/>
            <person name="Shibahara T."/>
            <person name="Tanaka T."/>
            <person name="Ishii S."/>
            <person name="Yamamoto J."/>
            <person name="Saito K."/>
            <person name="Kawai Y."/>
            <person name="Isono Y."/>
            <person name="Nakamura Y."/>
            <person name="Nagahari K."/>
            <person name="Murakami K."/>
            <person name="Yasuda T."/>
            <person name="Iwayanagi T."/>
            <person name="Wagatsuma M."/>
            <person name="Shiratori A."/>
            <person name="Sudo H."/>
            <person name="Hosoiri T."/>
            <person name="Kaku Y."/>
            <person name="Kodaira H."/>
            <person name="Kondo H."/>
            <person name="Sugawara M."/>
            <person name="Takahashi M."/>
            <person name="Kanda K."/>
            <person name="Yokoi T."/>
            <person name="Furuya T."/>
            <person name="Kikkawa E."/>
            <person name="Omura Y."/>
            <person name="Abe K."/>
            <person name="Kamihara K."/>
            <person name="Katsuta N."/>
            <person name="Sato K."/>
            <person name="Tanikawa M."/>
            <person name="Yamazaki M."/>
            <person name="Ninomiya K."/>
            <person name="Ishibashi T."/>
            <person name="Yamashita H."/>
            <person name="Murakawa K."/>
            <person name="Fujimori K."/>
            <person name="Tanai H."/>
            <person name="Kimata M."/>
            <person name="Watanabe M."/>
            <person name="Hiraoka S."/>
            <person name="Chiba Y."/>
            <person name="Ishida S."/>
            <person name="Ono Y."/>
            <person name="Takiguchi S."/>
            <person name="Watanabe S."/>
            <person name="Yosida M."/>
            <person name="Hotuta T."/>
            <person name="Kusano J."/>
            <person name="Kanehori K."/>
            <person name="Takahashi-Fujii A."/>
            <person name="Hara H."/>
            <person name="Tanase T.-O."/>
            <person name="Nomura Y."/>
            <person name="Togiya S."/>
            <person name="Komai F."/>
            <person name="Hara R."/>
            <person name="Takeuchi K."/>
            <person name="Arita M."/>
            <person name="Imose N."/>
            <person name="Musashino K."/>
            <person name="Yuuki H."/>
            <person name="Oshima A."/>
            <person name="Sasaki N."/>
            <person name="Aotsuka S."/>
            <person name="Yoshikawa Y."/>
            <person name="Matsunawa H."/>
            <person name="Ichihara T."/>
            <person name="Shiohata N."/>
            <person name="Sano S."/>
            <person name="Moriya S."/>
            <person name="Momiyama H."/>
            <person name="Satoh N."/>
            <person name="Takami S."/>
            <person name="Terashima Y."/>
            <person name="Suzuki O."/>
            <person name="Nakagawa S."/>
            <person name="Senoh A."/>
            <person name="Mizoguchi H."/>
            <person name="Goto Y."/>
            <person name="Shimizu F."/>
            <person name="Wakebe H."/>
            <person name="Hishigaki H."/>
            <person name="Watanabe T."/>
            <person name="Sugiyama A."/>
            <person name="Takemoto M."/>
            <person name="Kawakami B."/>
            <person name="Yamazaki M."/>
            <person name="Watanabe K."/>
            <person name="Kumagai A."/>
            <person name="Itakura S."/>
            <person name="Fukuzumi Y."/>
            <person name="Fujimori Y."/>
            <person name="Komiyama M."/>
            <person name="Tashiro H."/>
            <person name="Tanigami A."/>
            <person name="Fujiwara T."/>
            <person name="Ono T."/>
            <person name="Yamada K."/>
            <person name="Fujii Y."/>
            <person name="Ozaki K."/>
            <person name="Hirao M."/>
            <person name="Ohmori Y."/>
            <person name="Kawabata A."/>
            <person name="Hikiji T."/>
            <person name="Kobatake N."/>
            <person name="Inagaki H."/>
            <person name="Ikema Y."/>
            <person name="Okamoto S."/>
            <person name="Okitani R."/>
            <person name="Kawakami T."/>
            <person name="Noguchi S."/>
            <person name="Itoh T."/>
            <person name="Shigeta K."/>
            <person name="Senba T."/>
            <person name="Matsumura K."/>
            <person name="Nakajima Y."/>
            <person name="Mizuno T."/>
            <person name="Morinaga M."/>
            <person name="Sasaki M."/>
            <person name="Togashi T."/>
            <person name="Oyama M."/>
            <person name="Hata H."/>
            <person name="Watanabe M."/>
            <person name="Komatsu T."/>
            <person name="Mizushima-Sugano J."/>
            <person name="Satoh T."/>
            <person name="Shirai Y."/>
            <person name="Takahashi Y."/>
            <person name="Nakagawa K."/>
            <person name="Okumura K."/>
            <person name="Nagase T."/>
            <person name="Nomura N."/>
            <person name="Kikuchi H."/>
            <person name="Masuho Y."/>
            <person name="Yamashita R."/>
            <person name="Nakai K."/>
            <person name="Yada T."/>
            <person name="Nakamura Y."/>
            <person name="Ohara O."/>
            <person name="Isogai T."/>
            <person name="Sugano S."/>
        </authorList>
    </citation>
    <scope>NUCLEOTIDE SEQUENCE [LARGE SCALE MRNA] (ISOFORMS 1 AND 2)</scope>
    <source>
        <tissue>Amygdala</tissue>
        <tissue>Brain</tissue>
    </source>
</reference>
<reference key="3">
    <citation type="journal article" date="2006" name="Nature">
        <title>The DNA sequence and biological annotation of human chromosome 1.</title>
        <authorList>
            <person name="Gregory S.G."/>
            <person name="Barlow K.F."/>
            <person name="McLay K.E."/>
            <person name="Kaul R."/>
            <person name="Swarbreck D."/>
            <person name="Dunham A."/>
            <person name="Scott C.E."/>
            <person name="Howe K.L."/>
            <person name="Woodfine K."/>
            <person name="Spencer C.C.A."/>
            <person name="Jones M.C."/>
            <person name="Gillson C."/>
            <person name="Searle S."/>
            <person name="Zhou Y."/>
            <person name="Kokocinski F."/>
            <person name="McDonald L."/>
            <person name="Evans R."/>
            <person name="Phillips K."/>
            <person name="Atkinson A."/>
            <person name="Cooper R."/>
            <person name="Jones C."/>
            <person name="Hall R.E."/>
            <person name="Andrews T.D."/>
            <person name="Lloyd C."/>
            <person name="Ainscough R."/>
            <person name="Almeida J.P."/>
            <person name="Ambrose K.D."/>
            <person name="Anderson F."/>
            <person name="Andrew R.W."/>
            <person name="Ashwell R.I.S."/>
            <person name="Aubin K."/>
            <person name="Babbage A.K."/>
            <person name="Bagguley C.L."/>
            <person name="Bailey J."/>
            <person name="Beasley H."/>
            <person name="Bethel G."/>
            <person name="Bird C.P."/>
            <person name="Bray-Allen S."/>
            <person name="Brown J.Y."/>
            <person name="Brown A.J."/>
            <person name="Buckley D."/>
            <person name="Burton J."/>
            <person name="Bye J."/>
            <person name="Carder C."/>
            <person name="Chapman J.C."/>
            <person name="Clark S.Y."/>
            <person name="Clarke G."/>
            <person name="Clee C."/>
            <person name="Cobley V."/>
            <person name="Collier R.E."/>
            <person name="Corby N."/>
            <person name="Coville G.J."/>
            <person name="Davies J."/>
            <person name="Deadman R."/>
            <person name="Dunn M."/>
            <person name="Earthrowl M."/>
            <person name="Ellington A.G."/>
            <person name="Errington H."/>
            <person name="Frankish A."/>
            <person name="Frankland J."/>
            <person name="French L."/>
            <person name="Garner P."/>
            <person name="Garnett J."/>
            <person name="Gay L."/>
            <person name="Ghori M.R.J."/>
            <person name="Gibson R."/>
            <person name="Gilby L.M."/>
            <person name="Gillett W."/>
            <person name="Glithero R.J."/>
            <person name="Grafham D.V."/>
            <person name="Griffiths C."/>
            <person name="Griffiths-Jones S."/>
            <person name="Grocock R."/>
            <person name="Hammond S."/>
            <person name="Harrison E.S.I."/>
            <person name="Hart E."/>
            <person name="Haugen E."/>
            <person name="Heath P.D."/>
            <person name="Holmes S."/>
            <person name="Holt K."/>
            <person name="Howden P.J."/>
            <person name="Hunt A.R."/>
            <person name="Hunt S.E."/>
            <person name="Hunter G."/>
            <person name="Isherwood J."/>
            <person name="James R."/>
            <person name="Johnson C."/>
            <person name="Johnson D."/>
            <person name="Joy A."/>
            <person name="Kay M."/>
            <person name="Kershaw J.K."/>
            <person name="Kibukawa M."/>
            <person name="Kimberley A.M."/>
            <person name="King A."/>
            <person name="Knights A.J."/>
            <person name="Lad H."/>
            <person name="Laird G."/>
            <person name="Lawlor S."/>
            <person name="Leongamornlert D.A."/>
            <person name="Lloyd D.M."/>
            <person name="Loveland J."/>
            <person name="Lovell J."/>
            <person name="Lush M.J."/>
            <person name="Lyne R."/>
            <person name="Martin S."/>
            <person name="Mashreghi-Mohammadi M."/>
            <person name="Matthews L."/>
            <person name="Matthews N.S.W."/>
            <person name="McLaren S."/>
            <person name="Milne S."/>
            <person name="Mistry S."/>
            <person name="Moore M.J.F."/>
            <person name="Nickerson T."/>
            <person name="O'Dell C.N."/>
            <person name="Oliver K."/>
            <person name="Palmeiri A."/>
            <person name="Palmer S.A."/>
            <person name="Parker A."/>
            <person name="Patel D."/>
            <person name="Pearce A.V."/>
            <person name="Peck A.I."/>
            <person name="Pelan S."/>
            <person name="Phelps K."/>
            <person name="Phillimore B.J."/>
            <person name="Plumb R."/>
            <person name="Rajan J."/>
            <person name="Raymond C."/>
            <person name="Rouse G."/>
            <person name="Saenphimmachak C."/>
            <person name="Sehra H.K."/>
            <person name="Sheridan E."/>
            <person name="Shownkeen R."/>
            <person name="Sims S."/>
            <person name="Skuce C.D."/>
            <person name="Smith M."/>
            <person name="Steward C."/>
            <person name="Subramanian S."/>
            <person name="Sycamore N."/>
            <person name="Tracey A."/>
            <person name="Tromans A."/>
            <person name="Van Helmond Z."/>
            <person name="Wall M."/>
            <person name="Wallis J.M."/>
            <person name="White S."/>
            <person name="Whitehead S.L."/>
            <person name="Wilkinson J.E."/>
            <person name="Willey D.L."/>
            <person name="Williams H."/>
            <person name="Wilming L."/>
            <person name="Wray P.W."/>
            <person name="Wu Z."/>
            <person name="Coulson A."/>
            <person name="Vaudin M."/>
            <person name="Sulston J.E."/>
            <person name="Durbin R.M."/>
            <person name="Hubbard T."/>
            <person name="Wooster R."/>
            <person name="Dunham I."/>
            <person name="Carter N.P."/>
            <person name="McVean G."/>
            <person name="Ross M.T."/>
            <person name="Harrow J."/>
            <person name="Olson M.V."/>
            <person name="Beck S."/>
            <person name="Rogers J."/>
            <person name="Bentley D.R."/>
        </authorList>
    </citation>
    <scope>NUCLEOTIDE SEQUENCE [LARGE SCALE GENOMIC DNA]</scope>
</reference>
<reference key="4">
    <citation type="submission" date="2005-07" db="EMBL/GenBank/DDBJ databases">
        <authorList>
            <person name="Mural R.J."/>
            <person name="Istrail S."/>
            <person name="Sutton G.G."/>
            <person name="Florea L."/>
            <person name="Halpern A.L."/>
            <person name="Mobarry C.M."/>
            <person name="Lippert R."/>
            <person name="Walenz B."/>
            <person name="Shatkay H."/>
            <person name="Dew I."/>
            <person name="Miller J.R."/>
            <person name="Flanigan M.J."/>
            <person name="Edwards N.J."/>
            <person name="Bolanos R."/>
            <person name="Fasulo D."/>
            <person name="Halldorsson B.V."/>
            <person name="Hannenhalli S."/>
            <person name="Turner R."/>
            <person name="Yooseph S."/>
            <person name="Lu F."/>
            <person name="Nusskern D.R."/>
            <person name="Shue B.C."/>
            <person name="Zheng X.H."/>
            <person name="Zhong F."/>
            <person name="Delcher A.L."/>
            <person name="Huson D.H."/>
            <person name="Kravitz S.A."/>
            <person name="Mouchard L."/>
            <person name="Reinert K."/>
            <person name="Remington K.A."/>
            <person name="Clark A.G."/>
            <person name="Waterman M.S."/>
            <person name="Eichler E.E."/>
            <person name="Adams M.D."/>
            <person name="Hunkapiller M.W."/>
            <person name="Myers E.W."/>
            <person name="Venter J.C."/>
        </authorList>
    </citation>
    <scope>NUCLEOTIDE SEQUENCE [LARGE SCALE GENOMIC DNA]</scope>
</reference>
<reference key="5">
    <citation type="journal article" date="2004" name="Genome Res.">
        <title>The status, quality, and expansion of the NIH full-length cDNA project: the Mammalian Gene Collection (MGC).</title>
        <authorList>
            <consortium name="The MGC Project Team"/>
        </authorList>
    </citation>
    <scope>NUCLEOTIDE SEQUENCE [LARGE SCALE MRNA] (ISOFORM 1)</scope>
    <source>
        <tissue>Brain</tissue>
    </source>
</reference>
<reference key="6">
    <citation type="submission" date="1996-08" db="EMBL/GenBank/DDBJ databases">
        <title>Expression of novel gene mapped on chromosome 1q25.</title>
        <authorList>
            <person name="Park S.H."/>
            <person name="Kim C."/>
            <person name="Kang Y.H."/>
            <person name="Chung H.S."/>
            <person name="Kim H."/>
        </authorList>
    </citation>
    <scope>NUCLEOTIDE SEQUENCE [MRNA] OF 324-541 (ISOFORM 1/2)</scope>
    <source>
        <tissue>Brain</tissue>
    </source>
</reference>
<reference key="7">
    <citation type="journal article" date="2007" name="Endocrinology">
        <title>Bone morphogenetic protein and retinoic acid-inducible neural specific protein-3 is expressed in gonadotrope cell pituitary adenomas and induces proliferation, migration, and invasion.</title>
        <authorList>
            <person name="Shorts-Cary L."/>
            <person name="Xu M."/>
            <person name="Ertel J."/>
            <person name="Kleinschmidt-Demasters B.K."/>
            <person name="Lillehei K."/>
            <person name="Matsuoka I."/>
            <person name="Nielsen-Preiss S."/>
            <person name="Wierman M.E."/>
        </authorList>
    </citation>
    <scope>FUNCTION</scope>
    <scope>TISSUE SPECIFICITY</scope>
</reference>
<reference key="8">
    <citation type="journal article" date="2008" name="BMC Med. Genet.">
        <title>Genetic and functional association of FAM5C with myocardial infarction.</title>
        <authorList>
            <person name="Connelly J.J."/>
            <person name="Shah S.H."/>
            <person name="Doss J.F."/>
            <person name="Gadson S."/>
            <person name="Nelson S."/>
            <person name="Crosslin D.R."/>
            <person name="Hale A.B."/>
            <person name="Lou X."/>
            <person name="Wang T."/>
            <person name="Haynes C."/>
            <person name="Seo D."/>
            <person name="Crossman D.C."/>
            <person name="Mooser V."/>
            <person name="Granger C.B."/>
            <person name="Jones C.J."/>
            <person name="Kraus W.E."/>
            <person name="Hauser E.R."/>
            <person name="Gregory S.G."/>
        </authorList>
    </citation>
    <scope>TISSUE SPECIFICITY</scope>
</reference>
<reference key="9">
    <citation type="journal article" date="2009" name="Oncol. Rep.">
        <title>Expression of the FAM5C in tongue squamous cell carcinoma.</title>
        <authorList>
            <person name="Kuroiwa T."/>
            <person name="Yamamoto N."/>
            <person name="Onda T."/>
            <person name="Shibahara T."/>
        </authorList>
    </citation>
    <scope>TISSUE SPECIFICITY</scope>
</reference>
<reference key="10">
    <citation type="journal article" date="2012" name="Proc. Natl. Acad. Sci. U.S.A.">
        <title>N-terminal acetylome analyses and functional insights of the N-terminal acetyltransferase NatB.</title>
        <authorList>
            <person name="Van Damme P."/>
            <person name="Lasa M."/>
            <person name="Polevoda B."/>
            <person name="Gazquez C."/>
            <person name="Elosegui-Artola A."/>
            <person name="Kim D.S."/>
            <person name="De Juan-Pardo E."/>
            <person name="Demeyer K."/>
            <person name="Hole K."/>
            <person name="Larrea E."/>
            <person name="Timmerman E."/>
            <person name="Prieto J."/>
            <person name="Arnesen T."/>
            <person name="Sherman F."/>
            <person name="Gevaert K."/>
            <person name="Aldabe R."/>
        </authorList>
    </citation>
    <scope>IDENTIFICATION BY MASS SPECTROMETRY [LARGE SCALE ANALYSIS]</scope>
</reference>
<accession>Q76B58</accession>
<accession>B3KVP1</accession>
<accession>B7Z260</accession>
<accession>O95726</accession>
<accession>Q2M330</accession>
<evidence type="ECO:0000250" key="1"/>
<evidence type="ECO:0000255" key="2"/>
<evidence type="ECO:0000269" key="3">
    <source>
    </source>
</evidence>
<evidence type="ECO:0000269" key="4">
    <source>
    </source>
</evidence>
<evidence type="ECO:0000269" key="5">
    <source>
    </source>
</evidence>
<evidence type="ECO:0000303" key="6">
    <source>
    </source>
</evidence>
<evidence type="ECO:0000305" key="7"/>
<gene>
    <name type="primary">BRINP3</name>
    <name type="synonym">DBCCR1L</name>
    <name type="synonym">DBCCR1L1</name>
    <name type="synonym">FAM5C</name>
</gene>
<dbReference type="EMBL" id="AB111893">
    <property type="protein sequence ID" value="BAD04066.1"/>
    <property type="molecule type" value="mRNA"/>
</dbReference>
<dbReference type="EMBL" id="AK123024">
    <property type="protein sequence ID" value="BAG53853.1"/>
    <property type="molecule type" value="mRNA"/>
</dbReference>
<dbReference type="EMBL" id="AK294365">
    <property type="protein sequence ID" value="BAH11746.1"/>
    <property type="molecule type" value="mRNA"/>
</dbReference>
<dbReference type="EMBL" id="AL354771">
    <property type="status" value="NOT_ANNOTATED_CDS"/>
    <property type="molecule type" value="Genomic_DNA"/>
</dbReference>
<dbReference type="EMBL" id="AL365402">
    <property type="status" value="NOT_ANNOTATED_CDS"/>
    <property type="molecule type" value="Genomic_DNA"/>
</dbReference>
<dbReference type="EMBL" id="AL391645">
    <property type="status" value="NOT_ANNOTATED_CDS"/>
    <property type="molecule type" value="Genomic_DNA"/>
</dbReference>
<dbReference type="EMBL" id="CH471067">
    <property type="protein sequence ID" value="EAW91222.1"/>
    <property type="molecule type" value="Genomic_DNA"/>
</dbReference>
<dbReference type="EMBL" id="BC105052">
    <property type="protein sequence ID" value="AAI05053.1"/>
    <property type="molecule type" value="mRNA"/>
</dbReference>
<dbReference type="EMBL" id="BC105054">
    <property type="protein sequence ID" value="AAI05055.1"/>
    <property type="molecule type" value="mRNA"/>
</dbReference>
<dbReference type="EMBL" id="U67037">
    <property type="protein sequence ID" value="AAD09521.1"/>
    <property type="molecule type" value="mRNA"/>
</dbReference>
<dbReference type="CCDS" id="CCDS1373.1">
    <molecule id="Q76B58-1"/>
</dbReference>
<dbReference type="RefSeq" id="NP_001304117.1">
    <molecule id="Q76B58-2"/>
    <property type="nucleotide sequence ID" value="NM_001317188.2"/>
</dbReference>
<dbReference type="RefSeq" id="NP_950252.1">
    <molecule id="Q76B58-1"/>
    <property type="nucleotide sequence ID" value="NM_199051.3"/>
</dbReference>
<dbReference type="RefSeq" id="XP_011507778.1">
    <molecule id="Q76B58-2"/>
    <property type="nucleotide sequence ID" value="XM_011509476.3"/>
</dbReference>
<dbReference type="RefSeq" id="XP_016856614.1">
    <molecule id="Q76B58-1"/>
    <property type="nucleotide sequence ID" value="XM_017001125.2"/>
</dbReference>
<dbReference type="RefSeq" id="XP_016856615.1">
    <molecule id="Q76B58-1"/>
    <property type="nucleotide sequence ID" value="XM_017001126.2"/>
</dbReference>
<dbReference type="RefSeq" id="XP_016856618.1">
    <molecule id="Q76B58-2"/>
    <property type="nucleotide sequence ID" value="XM_017001129.2"/>
</dbReference>
<dbReference type="RefSeq" id="XP_016856619.1">
    <property type="nucleotide sequence ID" value="XM_017001130.1"/>
</dbReference>
<dbReference type="RefSeq" id="XP_047275201.1">
    <molecule id="Q76B58-1"/>
    <property type="nucleotide sequence ID" value="XM_047419245.1"/>
</dbReference>
<dbReference type="RefSeq" id="XP_047275206.1">
    <molecule id="Q76B58-1"/>
    <property type="nucleotide sequence ID" value="XM_047419250.1"/>
</dbReference>
<dbReference type="RefSeq" id="XP_054192235.1">
    <molecule id="Q76B58-1"/>
    <property type="nucleotide sequence ID" value="XM_054336260.1"/>
</dbReference>
<dbReference type="RefSeq" id="XP_054192236.1">
    <molecule id="Q76B58-1"/>
    <property type="nucleotide sequence ID" value="XM_054336261.1"/>
</dbReference>
<dbReference type="RefSeq" id="XP_054192237.1">
    <molecule id="Q76B58-1"/>
    <property type="nucleotide sequence ID" value="XM_054336262.1"/>
</dbReference>
<dbReference type="RefSeq" id="XP_054192238.1">
    <molecule id="Q76B58-1"/>
    <property type="nucleotide sequence ID" value="XM_054336263.1"/>
</dbReference>
<dbReference type="RefSeq" id="XP_054192239.1">
    <molecule id="Q76B58-1"/>
    <property type="nucleotide sequence ID" value="XM_054336264.1"/>
</dbReference>
<dbReference type="RefSeq" id="XP_054192244.1">
    <molecule id="Q76B58-2"/>
    <property type="nucleotide sequence ID" value="XM_054336269.1"/>
</dbReference>
<dbReference type="RefSeq" id="XP_054192245.1">
    <molecule id="Q76B58-2"/>
    <property type="nucleotide sequence ID" value="XM_054336270.1"/>
</dbReference>
<dbReference type="BioGRID" id="130891">
    <property type="interactions" value="27"/>
</dbReference>
<dbReference type="FunCoup" id="Q76B58">
    <property type="interactions" value="105"/>
</dbReference>
<dbReference type="IntAct" id="Q76B58">
    <property type="interactions" value="22"/>
</dbReference>
<dbReference type="STRING" id="9606.ENSP00000356432"/>
<dbReference type="GlyCosmos" id="Q76B58">
    <property type="glycosylation" value="6 sites, No reported glycans"/>
</dbReference>
<dbReference type="GlyGen" id="Q76B58">
    <property type="glycosylation" value="6 sites"/>
</dbReference>
<dbReference type="iPTMnet" id="Q76B58"/>
<dbReference type="PhosphoSitePlus" id="Q76B58"/>
<dbReference type="BioMuta" id="BRINP3"/>
<dbReference type="DMDM" id="74749831"/>
<dbReference type="jPOST" id="Q76B58"/>
<dbReference type="MassIVE" id="Q76B58"/>
<dbReference type="PaxDb" id="9606-ENSP00000356432"/>
<dbReference type="PeptideAtlas" id="Q76B58"/>
<dbReference type="ProteomicsDB" id="6410"/>
<dbReference type="ProteomicsDB" id="68662">
    <molecule id="Q76B58-1"/>
</dbReference>
<dbReference type="Antibodypedia" id="55879">
    <property type="antibodies" value="82 antibodies from 17 providers"/>
</dbReference>
<dbReference type="DNASU" id="339479"/>
<dbReference type="Ensembl" id="ENST00000367462.5">
    <molecule id="Q76B58-1"/>
    <property type="protein sequence ID" value="ENSP00000356432.3"/>
    <property type="gene ID" value="ENSG00000162670.11"/>
</dbReference>
<dbReference type="GeneID" id="339479"/>
<dbReference type="KEGG" id="hsa:339479"/>
<dbReference type="MANE-Select" id="ENST00000367462.5">
    <property type="protein sequence ID" value="ENSP00000356432.3"/>
    <property type="RefSeq nucleotide sequence ID" value="NM_199051.3"/>
    <property type="RefSeq protein sequence ID" value="NP_950252.1"/>
</dbReference>
<dbReference type="UCSC" id="uc001gse.2">
    <molecule id="Q76B58-1"/>
    <property type="organism name" value="human"/>
</dbReference>
<dbReference type="AGR" id="HGNC:22393"/>
<dbReference type="CTD" id="339479"/>
<dbReference type="DisGeNET" id="339479"/>
<dbReference type="GeneCards" id="BRINP3"/>
<dbReference type="HGNC" id="HGNC:22393">
    <property type="gene designation" value="BRINP3"/>
</dbReference>
<dbReference type="HPA" id="ENSG00000162670">
    <property type="expression patterns" value="Tissue enhanced (brain, intestine)"/>
</dbReference>
<dbReference type="MalaCards" id="BRINP3"/>
<dbReference type="MIM" id="618390">
    <property type="type" value="gene"/>
</dbReference>
<dbReference type="neXtProt" id="NX_Q76B58"/>
<dbReference type="OpenTargets" id="ENSG00000162670"/>
<dbReference type="PharmGKB" id="PA142671896"/>
<dbReference type="VEuPathDB" id="HostDB:ENSG00000162670"/>
<dbReference type="eggNOG" id="ENOG502QQZS">
    <property type="taxonomic scope" value="Eukaryota"/>
</dbReference>
<dbReference type="GeneTree" id="ENSGT00940000156099"/>
<dbReference type="HOGENOM" id="CLU_018347_0_0_1"/>
<dbReference type="InParanoid" id="Q76B58"/>
<dbReference type="OMA" id="CQCGPRF"/>
<dbReference type="OrthoDB" id="10013872at2759"/>
<dbReference type="PAN-GO" id="Q76B58">
    <property type="GO annotations" value="6 GO annotations based on evolutionary models"/>
</dbReference>
<dbReference type="PhylomeDB" id="Q76B58"/>
<dbReference type="TreeFam" id="TF331600"/>
<dbReference type="PathwayCommons" id="Q76B58"/>
<dbReference type="SignaLink" id="Q76B58"/>
<dbReference type="BioGRID-ORCS" id="339479">
    <property type="hits" value="13 hits in 1138 CRISPR screens"/>
</dbReference>
<dbReference type="ChiTaRS" id="BRINP3">
    <property type="organism name" value="human"/>
</dbReference>
<dbReference type="GenomeRNAi" id="339479"/>
<dbReference type="Pharos" id="Q76B58">
    <property type="development level" value="Tbio"/>
</dbReference>
<dbReference type="PRO" id="PR:Q76B58"/>
<dbReference type="Proteomes" id="UP000005640">
    <property type="component" value="Chromosome 1"/>
</dbReference>
<dbReference type="RNAct" id="Q76B58">
    <property type="molecule type" value="protein"/>
</dbReference>
<dbReference type="Bgee" id="ENSG00000162670">
    <property type="expression patterns" value="Expressed in primordial germ cell in gonad and 123 other cell types or tissues"/>
</dbReference>
<dbReference type="ExpressionAtlas" id="Q76B58">
    <property type="expression patterns" value="baseline and differential"/>
</dbReference>
<dbReference type="GO" id="GO:0005737">
    <property type="term" value="C:cytoplasm"/>
    <property type="evidence" value="ECO:0000318"/>
    <property type="project" value="GO_Central"/>
</dbReference>
<dbReference type="GO" id="GO:0030425">
    <property type="term" value="C:dendrite"/>
    <property type="evidence" value="ECO:0000318"/>
    <property type="project" value="GO_Central"/>
</dbReference>
<dbReference type="GO" id="GO:0005576">
    <property type="term" value="C:extracellular region"/>
    <property type="evidence" value="ECO:0007669"/>
    <property type="project" value="UniProtKB-SubCell"/>
</dbReference>
<dbReference type="GO" id="GO:0005739">
    <property type="term" value="C:mitochondrion"/>
    <property type="evidence" value="ECO:0007669"/>
    <property type="project" value="UniProtKB-SubCell"/>
</dbReference>
<dbReference type="GO" id="GO:0043025">
    <property type="term" value="C:neuronal cell body"/>
    <property type="evidence" value="ECO:0000318"/>
    <property type="project" value="GO_Central"/>
</dbReference>
<dbReference type="GO" id="GO:0071300">
    <property type="term" value="P:cellular response to retinoic acid"/>
    <property type="evidence" value="ECO:0000250"/>
    <property type="project" value="UniProtKB"/>
</dbReference>
<dbReference type="GO" id="GO:0021953">
    <property type="term" value="P:central nervous system neuron differentiation"/>
    <property type="evidence" value="ECO:0000250"/>
    <property type="project" value="UniProtKB"/>
</dbReference>
<dbReference type="GO" id="GO:0035640">
    <property type="term" value="P:exploration behavior"/>
    <property type="evidence" value="ECO:0007669"/>
    <property type="project" value="Ensembl"/>
</dbReference>
<dbReference type="GO" id="GO:0035264">
    <property type="term" value="P:multicellular organism growth"/>
    <property type="evidence" value="ECO:0007669"/>
    <property type="project" value="Ensembl"/>
</dbReference>
<dbReference type="GO" id="GO:0045930">
    <property type="term" value="P:negative regulation of mitotic cell cycle"/>
    <property type="evidence" value="ECO:0000250"/>
    <property type="project" value="UniProtKB"/>
</dbReference>
<dbReference type="GO" id="GO:0045666">
    <property type="term" value="P:positive regulation of neuron differentiation"/>
    <property type="evidence" value="ECO:0007669"/>
    <property type="project" value="InterPro"/>
</dbReference>
<dbReference type="GO" id="GO:0035176">
    <property type="term" value="P:social behavior"/>
    <property type="evidence" value="ECO:0007669"/>
    <property type="project" value="Ensembl"/>
</dbReference>
<dbReference type="InterPro" id="IPR033237">
    <property type="entry name" value="BRINP"/>
</dbReference>
<dbReference type="InterPro" id="IPR009030">
    <property type="entry name" value="Growth_fac_rcpt_cys_sf"/>
</dbReference>
<dbReference type="InterPro" id="IPR020864">
    <property type="entry name" value="MACPF"/>
</dbReference>
<dbReference type="PANTHER" id="PTHR15564:SF2">
    <property type="entry name" value="BMP_RETINOIC ACID-INDUCIBLE NEURAL-SPECIFIC PROTEIN 3"/>
    <property type="match status" value="1"/>
</dbReference>
<dbReference type="PANTHER" id="PTHR15564">
    <property type="entry name" value="MACPF DOMAIN-CONTAINING PROTEIN"/>
    <property type="match status" value="1"/>
</dbReference>
<dbReference type="Pfam" id="PF19052">
    <property type="entry name" value="BRINP"/>
    <property type="match status" value="1"/>
</dbReference>
<dbReference type="Pfam" id="PF25415">
    <property type="entry name" value="EGF_BRNP1-3"/>
    <property type="match status" value="1"/>
</dbReference>
<dbReference type="Pfam" id="PF01823">
    <property type="entry name" value="MACPF"/>
    <property type="match status" value="1"/>
</dbReference>
<dbReference type="SMART" id="SM00457">
    <property type="entry name" value="MACPF"/>
    <property type="match status" value="1"/>
</dbReference>
<dbReference type="SUPFAM" id="SSF57184">
    <property type="entry name" value="Growth factor receptor domain"/>
    <property type="match status" value="1"/>
</dbReference>
<sequence>MIWRSRAGAELFSLMALWEWIALSLHCWVLAVAAVSDQHATSPFDWLLSDKGPFHRSQEYTDFVDRSRQGFSTRYKIYREFGRWKVNNLAVERRNFLGSPLPLAPEFFRNIRLLGRRPTLQQITENLIKKYGTHFLLSATLGGEESLTIFVDKRKLSKRAEGSDSTTNSSSVTLETLHQLAASYFIDRDSTLRRLHHIQIASTAIKVTETRTGPLGCSNYDNLDSVSSVLVQSPENKIQLQGLQVLLPDYLQERFVQAALSYIACNSEGEFICKENDCWCHCGPKFPECNCPSMDIQAMEENLLRITETWKAYNSDFEESDEFKLFMKRLPMNYFLNTSTIMHLWTMDSNFQRRYEQLENSMKQLFLKAQKIVHKLFSLSKRCHKQPLISLPRQRTSTYWLTRIQSFLYCNENGLLGSFSEETHSCTCPNDQVVCTAFLPCTVGDASACLTCAPDNRTRCGTCNTGYMLSQGLCKPEVAESTDHYIGFETDLQDLEMKYLLQKTDRRIEVHAIFISNDMRLNSWFDPSWRKRMLLTLKSNKYKSSLVHMILGLSLQICLTKNSTLEPVLAVYVNPFGGSHSESWFMPVNENSFPDWERTKLDLPLQCYNWTLTLGNKWKTFFETVHIYLRSRIKSNGPNGNESIYYEPLEFIDPSRNLGYMKINNIQVFGYSMHFDPEAIRDLILQLDYPYTQGSQDSALLQLLEIRDRVNKLSPPGQRRLDLFSCLLRHRLKLSTSEVVRIQSALQAFNAKLPNTMDYDTTKLCS</sequence>
<organism>
    <name type="scientific">Homo sapiens</name>
    <name type="common">Human</name>
    <dbReference type="NCBI Taxonomy" id="9606"/>
    <lineage>
        <taxon>Eukaryota</taxon>
        <taxon>Metazoa</taxon>
        <taxon>Chordata</taxon>
        <taxon>Craniata</taxon>
        <taxon>Vertebrata</taxon>
        <taxon>Euteleostomi</taxon>
        <taxon>Mammalia</taxon>
        <taxon>Eutheria</taxon>
        <taxon>Euarchontoglires</taxon>
        <taxon>Primates</taxon>
        <taxon>Haplorrhini</taxon>
        <taxon>Catarrhini</taxon>
        <taxon>Hominidae</taxon>
        <taxon>Homo</taxon>
    </lineage>
</organism>
<comment type="function">
    <text evidence="3">Inhibits neuronal cell proliferation by negative regulation of the cell cycle transition. Promotes pituitary gonadotrope cell proliferation, migration and invasion, when overexpressed. May play a role in cell pituitary tumor development.</text>
</comment>
<comment type="subcellular location">
    <subcellularLocation>
        <location evidence="7">Secreted</location>
    </subcellularLocation>
    <subcellularLocation>
        <location evidence="1">Mitochondrion</location>
    </subcellularLocation>
</comment>
<comment type="alternative products">
    <event type="alternative splicing"/>
    <isoform>
        <id>Q76B58-1</id>
        <name>1</name>
        <sequence type="displayed"/>
    </isoform>
    <isoform>
        <id>Q76B58-2</id>
        <name>2</name>
        <sequence type="described" ref="VSP_055545 VSP_055546"/>
    </isoform>
</comment>
<comment type="tissue specificity">
    <text evidence="3 4 5">Strongly expressed in oral keratinocytes compared to the weak expression in tongue squamous cell carcinoma (SCC). Expressed in endothelial and aortic smooth muscle cells. Overexpressed in gonadotropinomas compared to normal pituitarie tissues.</text>
</comment>
<comment type="similarity">
    <text evidence="7">Belongs to the BRINP family.</text>
</comment>